<evidence type="ECO:0000255" key="1"/>
<evidence type="ECO:0000305" key="2"/>
<name>OMP7_STAAE</name>
<comment type="function">
    <text>Binds various plasma and ECM-proteins.</text>
</comment>
<comment type="subcellular location">
    <subcellularLocation>
        <location>Cell membrane</location>
    </subcellularLocation>
</comment>
<organism>
    <name type="scientific">Staphylococcus aureus (strain Newman)</name>
    <dbReference type="NCBI Taxonomy" id="426430"/>
    <lineage>
        <taxon>Bacteria</taxon>
        <taxon>Bacillati</taxon>
        <taxon>Bacillota</taxon>
        <taxon>Bacilli</taxon>
        <taxon>Bacillales</taxon>
        <taxon>Staphylococcaceae</taxon>
        <taxon>Staphylococcus</taxon>
    </lineage>
</organism>
<accession>A6QIG2</accession>
<accession>P21223</accession>
<accession>Q9K4S8</accession>
<gene>
    <name type="ordered locus">NWMN_1872</name>
</gene>
<feature type="signal peptide" evidence="1">
    <location>
        <begin position="1"/>
        <end position="30"/>
    </location>
</feature>
<feature type="chain" id="PRO_0000324108" description="65 kDa membrane protein">
    <location>
        <begin position="31"/>
        <end position="584"/>
    </location>
</feature>
<feature type="repeat" description="MAP 1">
    <location>
        <begin position="45"/>
        <end position="154"/>
    </location>
</feature>
<feature type="repeat" description="MAP 2">
    <location>
        <begin position="156"/>
        <end position="265"/>
    </location>
</feature>
<feature type="repeat" description="MAP 3">
    <location>
        <begin position="266"/>
        <end position="374"/>
    </location>
</feature>
<feature type="repeat" description="MAP 4">
    <location>
        <begin position="375"/>
        <end position="474"/>
    </location>
</feature>
<feature type="repeat" description="MAP 5">
    <location>
        <begin position="475"/>
        <end position="584"/>
    </location>
</feature>
<feature type="sequence conflict" description="In Ref. 1; CAB94853." evidence="2" ref="1">
    <original>A</original>
    <variation>V</variation>
    <location>
        <position position="124"/>
    </location>
</feature>
<feature type="sequence conflict" description="In Ref. 1; CAB94853." evidence="2" ref="1">
    <original>T</original>
    <variation>A</variation>
    <location>
        <position position="434"/>
    </location>
</feature>
<feature type="sequence conflict" description="In Ref. 1; CAB94853." evidence="2" ref="1">
    <original>K</original>
    <variation>R</variation>
    <location>
        <position position="543"/>
    </location>
</feature>
<feature type="sequence conflict" description="In Ref. 1; CAB94853." evidence="2" ref="1">
    <original>D</original>
    <variation>G</variation>
    <location>
        <position position="571"/>
    </location>
</feature>
<sequence length="584" mass="65574">MKFKSLITTTLALGVLASTGANFNNNEASAAAKPLDKSSSSLHHGYSKVHVPYAITVNGTSQNILSSLTFNKNQNISYKDLEDRVKSVLKSDRGISDIDLRLSKQAKYTVYFKNGTKKVIDLKAGIYTADLINTSEIKAININVDTKKQVEDKKKDKANYQVPYTITVNGTSQNILSNLTFNKNQNISYKDLEDKVKSVLESNRGITDVDLRLSKQAKYTVNFKNGTKKVIDLKSGIYTANLINSSDIKSININVDTKKHIENKAKRNYQVPYSINLNGTSTNILSNLSFSNKPWTNYKNLTSQIKSVLKHDRGISEQDLKYAKKAYYTVYFKNGGKRILQLNSKNYTANLVHAKDVKRIEITVKTGTKAKADRYVPYTIAVNGTSTPILSDLKFTGDPRVGYKDISKKVKSVLKHDRGIGERELKYAKKATYTVHFKNGTKKVININSNISQLNLLYVQDIKKIDIDVKTGTKAKADSYVPYTIAVNGTSTPILSKLKISNKQLISYKYLNDKVKSVLKSERGISDLDLKFAKQAKYTVYFKNGKKQVVNLKSDIFTPNLFSAKDIKKIDIDVKQYTKSKKNK</sequence>
<reference key="1">
    <citation type="journal article" date="2001" name="Clin. Diagn. Lab. Immunol.">
        <title>Analogs of Eap protein are conserved and prevalent in clinical Staphylococcus aureus isolates.</title>
        <authorList>
            <person name="Hussain M."/>
            <person name="Becker K."/>
            <person name="von Eiff C."/>
            <person name="Peters G."/>
            <person name="Herrmann M."/>
        </authorList>
    </citation>
    <scope>NUCLEOTIDE SEQUENCE [GENOMIC DNA]</scope>
</reference>
<reference key="2">
    <citation type="journal article" date="2008" name="J. Bacteriol.">
        <title>Genome sequence of Staphylococcus aureus strain Newman and comparative analysis of staphylococcal genomes: polymorphism and evolution of two major pathogenicity islands.</title>
        <authorList>
            <person name="Baba T."/>
            <person name="Bae T."/>
            <person name="Schneewind O."/>
            <person name="Takeuchi F."/>
            <person name="Hiramatsu K."/>
        </authorList>
    </citation>
    <scope>NUCLEOTIDE SEQUENCE [LARGE SCALE GENOMIC DNA]</scope>
    <source>
        <strain>Newman</strain>
    </source>
</reference>
<reference key="3">
    <citation type="submission" date="1999-02" db="UniProtKB">
        <title>Map-n protein deficient mutant of Staphylococcus aureus Newman binds less to fibronectin and collagen coated surfaces. A 70 kDa vitronectin protein of Staphylococcus aureus Newman.</title>
        <authorList>
            <person name="Hussain M.S."/>
            <person name="Herrmann M."/>
            <person name="Chhatwal G.S."/>
            <person name="Peters G."/>
        </authorList>
    </citation>
    <scope>PROTEIN SEQUENCE OF 31-53</scope>
</reference>
<protein>
    <recommendedName>
        <fullName>65 kDa membrane protein</fullName>
    </recommendedName>
    <alternativeName>
        <fullName>map-ND2C</fullName>
    </alternativeName>
</protein>
<dbReference type="EMBL" id="AJ290973">
    <property type="protein sequence ID" value="CAB94853.1"/>
    <property type="molecule type" value="Genomic_DNA"/>
</dbReference>
<dbReference type="EMBL" id="AP009351">
    <property type="protein sequence ID" value="BAF68144.1"/>
    <property type="molecule type" value="Genomic_DNA"/>
</dbReference>
<dbReference type="SMR" id="A6QIG2"/>
<dbReference type="KEGG" id="sae:NWMN_1872"/>
<dbReference type="HOGENOM" id="CLU_466842_0_0_9"/>
<dbReference type="Proteomes" id="UP000006386">
    <property type="component" value="Chromosome"/>
</dbReference>
<dbReference type="GO" id="GO:0005886">
    <property type="term" value="C:plasma membrane"/>
    <property type="evidence" value="ECO:0007669"/>
    <property type="project" value="UniProtKB-SubCell"/>
</dbReference>
<dbReference type="Gene3D" id="3.10.20.120">
    <property type="match status" value="5"/>
</dbReference>
<dbReference type="InterPro" id="IPR005298">
    <property type="entry name" value="MAP_dom"/>
</dbReference>
<dbReference type="Pfam" id="PF03642">
    <property type="entry name" value="MAP"/>
    <property type="match status" value="5"/>
</dbReference>
<dbReference type="PROSITE" id="PS51223">
    <property type="entry name" value="MAP"/>
    <property type="match status" value="5"/>
</dbReference>
<proteinExistence type="evidence at protein level"/>
<keyword id="KW-1003">Cell membrane</keyword>
<keyword id="KW-0903">Direct protein sequencing</keyword>
<keyword id="KW-0472">Membrane</keyword>
<keyword id="KW-0677">Repeat</keyword>
<keyword id="KW-0732">Signal</keyword>